<dbReference type="EC" id="2.3.1.47" evidence="1"/>
<dbReference type="EMBL" id="AM902716">
    <property type="protein sequence ID" value="CAP40341.1"/>
    <property type="molecule type" value="Genomic_DNA"/>
</dbReference>
<dbReference type="SMR" id="A9HVE9"/>
<dbReference type="STRING" id="94624.Bpet0010"/>
<dbReference type="KEGG" id="bpt:Bpet0010"/>
<dbReference type="eggNOG" id="COG0156">
    <property type="taxonomic scope" value="Bacteria"/>
</dbReference>
<dbReference type="UniPathway" id="UPA00078"/>
<dbReference type="Proteomes" id="UP000001225">
    <property type="component" value="Chromosome"/>
</dbReference>
<dbReference type="GO" id="GO:0008710">
    <property type="term" value="F:8-amino-7-oxononanoate synthase activity"/>
    <property type="evidence" value="ECO:0007669"/>
    <property type="project" value="UniProtKB-UniRule"/>
</dbReference>
<dbReference type="GO" id="GO:0030170">
    <property type="term" value="F:pyridoxal phosphate binding"/>
    <property type="evidence" value="ECO:0007669"/>
    <property type="project" value="UniProtKB-UniRule"/>
</dbReference>
<dbReference type="GO" id="GO:0009102">
    <property type="term" value="P:biotin biosynthetic process"/>
    <property type="evidence" value="ECO:0007669"/>
    <property type="project" value="UniProtKB-UniRule"/>
</dbReference>
<dbReference type="Gene3D" id="3.90.1150.10">
    <property type="entry name" value="Aspartate Aminotransferase, domain 1"/>
    <property type="match status" value="1"/>
</dbReference>
<dbReference type="Gene3D" id="3.40.640.10">
    <property type="entry name" value="Type I PLP-dependent aspartate aminotransferase-like (Major domain)"/>
    <property type="match status" value="1"/>
</dbReference>
<dbReference type="HAMAP" id="MF_01693">
    <property type="entry name" value="BioF_aminotrans_2"/>
    <property type="match status" value="1"/>
</dbReference>
<dbReference type="InterPro" id="IPR004839">
    <property type="entry name" value="Aminotransferase_I/II_large"/>
</dbReference>
<dbReference type="InterPro" id="IPR050087">
    <property type="entry name" value="AON_synthase_class-II"/>
</dbReference>
<dbReference type="InterPro" id="IPR004723">
    <property type="entry name" value="AONS_Archaea/Proteobacteria"/>
</dbReference>
<dbReference type="InterPro" id="IPR022834">
    <property type="entry name" value="AONS_Proteobacteria"/>
</dbReference>
<dbReference type="InterPro" id="IPR015424">
    <property type="entry name" value="PyrdxlP-dep_Trfase"/>
</dbReference>
<dbReference type="InterPro" id="IPR015421">
    <property type="entry name" value="PyrdxlP-dep_Trfase_major"/>
</dbReference>
<dbReference type="InterPro" id="IPR015422">
    <property type="entry name" value="PyrdxlP-dep_Trfase_small"/>
</dbReference>
<dbReference type="NCBIfam" id="TIGR00858">
    <property type="entry name" value="bioF"/>
    <property type="match status" value="1"/>
</dbReference>
<dbReference type="PANTHER" id="PTHR13693:SF100">
    <property type="entry name" value="8-AMINO-7-OXONONANOATE SYNTHASE"/>
    <property type="match status" value="1"/>
</dbReference>
<dbReference type="PANTHER" id="PTHR13693">
    <property type="entry name" value="CLASS II AMINOTRANSFERASE/8-AMINO-7-OXONONANOATE SYNTHASE"/>
    <property type="match status" value="1"/>
</dbReference>
<dbReference type="Pfam" id="PF00155">
    <property type="entry name" value="Aminotran_1_2"/>
    <property type="match status" value="1"/>
</dbReference>
<dbReference type="SUPFAM" id="SSF53383">
    <property type="entry name" value="PLP-dependent transferases"/>
    <property type="match status" value="1"/>
</dbReference>
<reference key="1">
    <citation type="journal article" date="2008" name="BMC Genomics">
        <title>The missing link: Bordetella petrii is endowed with both the metabolic versatility of environmental bacteria and virulence traits of pathogenic Bordetellae.</title>
        <authorList>
            <person name="Gross R."/>
            <person name="Guzman C.A."/>
            <person name="Sebaihia M."/>
            <person name="Martin dos Santos V.A.P."/>
            <person name="Pieper D.H."/>
            <person name="Koebnik R."/>
            <person name="Lechner M."/>
            <person name="Bartels D."/>
            <person name="Buhrmester J."/>
            <person name="Choudhuri J.V."/>
            <person name="Ebensen T."/>
            <person name="Gaigalat L."/>
            <person name="Herrmann S."/>
            <person name="Khachane A.N."/>
            <person name="Larisch C."/>
            <person name="Link S."/>
            <person name="Linke B."/>
            <person name="Meyer F."/>
            <person name="Mormann S."/>
            <person name="Nakunst D."/>
            <person name="Rueckert C."/>
            <person name="Schneiker-Bekel S."/>
            <person name="Schulze K."/>
            <person name="Voerholter F.-J."/>
            <person name="Yevsa T."/>
            <person name="Engle J.T."/>
            <person name="Goldman W.E."/>
            <person name="Puehler A."/>
            <person name="Goebel U.B."/>
            <person name="Goesmann A."/>
            <person name="Bloecker H."/>
            <person name="Kaiser O."/>
            <person name="Martinez-Arias R."/>
        </authorList>
    </citation>
    <scope>NUCLEOTIDE SEQUENCE [LARGE SCALE GENOMIC DNA]</scope>
    <source>
        <strain>ATCC BAA-461 / DSM 12804 / CCUG 43448</strain>
    </source>
</reference>
<accession>A9HVE9</accession>
<comment type="function">
    <text evidence="1">Catalyzes the decarboxylative condensation of pimeloyl-[acyl-carrier protein] and L-alanine to produce 8-amino-7-oxononanoate (AON), [acyl-carrier protein], and carbon dioxide.</text>
</comment>
<comment type="catalytic activity">
    <reaction evidence="1">
        <text>6-carboxyhexanoyl-[ACP] + L-alanine + H(+) = (8S)-8-amino-7-oxononanoate + holo-[ACP] + CO2</text>
        <dbReference type="Rhea" id="RHEA:42288"/>
        <dbReference type="Rhea" id="RHEA-COMP:9685"/>
        <dbReference type="Rhea" id="RHEA-COMP:9955"/>
        <dbReference type="ChEBI" id="CHEBI:15378"/>
        <dbReference type="ChEBI" id="CHEBI:16526"/>
        <dbReference type="ChEBI" id="CHEBI:57972"/>
        <dbReference type="ChEBI" id="CHEBI:64479"/>
        <dbReference type="ChEBI" id="CHEBI:78846"/>
        <dbReference type="ChEBI" id="CHEBI:149468"/>
        <dbReference type="EC" id="2.3.1.47"/>
    </reaction>
</comment>
<comment type="cofactor">
    <cofactor evidence="1">
        <name>pyridoxal 5'-phosphate</name>
        <dbReference type="ChEBI" id="CHEBI:597326"/>
    </cofactor>
</comment>
<comment type="pathway">
    <text evidence="1">Cofactor biosynthesis; biotin biosynthesis.</text>
</comment>
<comment type="subunit">
    <text evidence="1">Homodimer.</text>
</comment>
<comment type="similarity">
    <text evidence="1">Belongs to the class-II pyridoxal-phosphate-dependent aminotransferase family. BioF subfamily.</text>
</comment>
<feature type="chain" id="PRO_0000380925" description="8-amino-7-oxononanoate synthase">
    <location>
        <begin position="1"/>
        <end position="396"/>
    </location>
</feature>
<feature type="binding site" evidence="1">
    <location>
        <position position="21"/>
    </location>
    <ligand>
        <name>substrate</name>
    </ligand>
</feature>
<feature type="binding site" evidence="1">
    <location>
        <begin position="112"/>
        <end position="113"/>
    </location>
    <ligand>
        <name>pyridoxal 5'-phosphate</name>
        <dbReference type="ChEBI" id="CHEBI:597326"/>
    </ligand>
</feature>
<feature type="binding site" evidence="1">
    <location>
        <position position="137"/>
    </location>
    <ligand>
        <name>substrate</name>
    </ligand>
</feature>
<feature type="binding site" evidence="1">
    <location>
        <position position="183"/>
    </location>
    <ligand>
        <name>pyridoxal 5'-phosphate</name>
        <dbReference type="ChEBI" id="CHEBI:597326"/>
    </ligand>
</feature>
<feature type="binding site" evidence="1">
    <location>
        <position position="211"/>
    </location>
    <ligand>
        <name>pyridoxal 5'-phosphate</name>
        <dbReference type="ChEBI" id="CHEBI:597326"/>
    </ligand>
</feature>
<feature type="binding site" evidence="1">
    <location>
        <position position="239"/>
    </location>
    <ligand>
        <name>pyridoxal 5'-phosphate</name>
        <dbReference type="ChEBI" id="CHEBI:597326"/>
    </ligand>
</feature>
<feature type="binding site" evidence="1">
    <location>
        <position position="358"/>
    </location>
    <ligand>
        <name>substrate</name>
    </ligand>
</feature>
<feature type="modified residue" description="N6-(pyridoxal phosphate)lysine" evidence="1">
    <location>
        <position position="242"/>
    </location>
</feature>
<gene>
    <name evidence="1" type="primary">bioF</name>
    <name type="ordered locus">Bpet0010</name>
</gene>
<proteinExistence type="inferred from homology"/>
<organism>
    <name type="scientific">Bordetella petrii (strain ATCC BAA-461 / DSM 12804 / CCUG 43448)</name>
    <dbReference type="NCBI Taxonomy" id="340100"/>
    <lineage>
        <taxon>Bacteria</taxon>
        <taxon>Pseudomonadati</taxon>
        <taxon>Pseudomonadota</taxon>
        <taxon>Betaproteobacteria</taxon>
        <taxon>Burkholderiales</taxon>
        <taxon>Alcaligenaceae</taxon>
        <taxon>Bordetella</taxon>
    </lineage>
</organism>
<name>BIOF_BORPD</name>
<protein>
    <recommendedName>
        <fullName evidence="1">8-amino-7-oxononanoate synthase</fullName>
        <shortName evidence="1">AONS</shortName>
        <ecNumber evidence="1">2.3.1.47</ecNumber>
    </recommendedName>
    <alternativeName>
        <fullName evidence="1">7-keto-8-amino-pelargonic acid synthase</fullName>
        <shortName evidence="1">7-KAP synthase</shortName>
        <shortName evidence="1">KAPA synthase</shortName>
    </alternativeName>
    <alternativeName>
        <fullName evidence="1">8-amino-7-ketopelargonate synthase</fullName>
    </alternativeName>
</protein>
<evidence type="ECO:0000255" key="1">
    <source>
        <dbReference type="HAMAP-Rule" id="MF_01693"/>
    </source>
</evidence>
<sequence>MQLLDNLDAALRKLDAQHLRRRRRTAESPCAPHVRVDGRDMLAFCSNDYLGLAAHPVIVAALAEGAARYGAGSGASHLISGHSHAHAQLEERLANMLAPHLEQPRALYFCTGYMANLAVLGALAGRDADIFSEALNHASLIDGARLSRARVQVYPHADLDALADMLAASRAQTRLIVSDGVFSMDGDIAPLRDLLALAERHGAWLVVDDAHGFGVLGEHGRGVLEHAGLRSPHLVLMGTLGKAAGVAGAFVAAHATVIDWLVNRARPYIFSTAAAPAQAHALMASLNLIEGSEGRQRRARLQALAQQLQARLSLRQWRHQPTPTAIQPIVLGANAHALRAAAGLESQGLWVPAIRPPTVPPGTARLRVTLSASHIPAHVDRLADALNQLDNEACHA</sequence>
<keyword id="KW-0093">Biotin biosynthesis</keyword>
<keyword id="KW-0663">Pyridoxal phosphate</keyword>
<keyword id="KW-0808">Transferase</keyword>